<dbReference type="EMBL" id="Z19521">
    <property type="protein sequence ID" value="CAA79581.1"/>
    <property type="molecule type" value="mRNA"/>
</dbReference>
<dbReference type="EMBL" id="X64414">
    <property type="protein sequence ID" value="CAA45759.1"/>
    <property type="molecule type" value="mRNA"/>
</dbReference>
<dbReference type="EMBL" id="AC161371">
    <property type="status" value="NOT_ANNOTATED_CDS"/>
    <property type="molecule type" value="Genomic_DNA"/>
</dbReference>
<dbReference type="EMBL" id="CH466522">
    <property type="protein sequence ID" value="EDL25212.1"/>
    <property type="molecule type" value="Genomic_DNA"/>
</dbReference>
<dbReference type="EMBL" id="BC053041">
    <property type="protein sequence ID" value="AAH53041.1"/>
    <property type="molecule type" value="mRNA"/>
</dbReference>
<dbReference type="CCDS" id="CCDS22910.1"/>
<dbReference type="PIR" id="I48623">
    <property type="entry name" value="QRMSLD"/>
</dbReference>
<dbReference type="RefSeq" id="NP_001239587.1">
    <property type="nucleotide sequence ID" value="NM_001252658.1"/>
</dbReference>
<dbReference type="RefSeq" id="NP_001239588.1">
    <property type="nucleotide sequence ID" value="NM_001252659.1"/>
</dbReference>
<dbReference type="RefSeq" id="NP_034830.2">
    <property type="nucleotide sequence ID" value="NM_010700.3"/>
</dbReference>
<dbReference type="SMR" id="P35951"/>
<dbReference type="BioGRID" id="201133">
    <property type="interactions" value="8"/>
</dbReference>
<dbReference type="ComplexPortal" id="CPX-129">
    <property type="entry name" value="LDLR-PCSK9 complex"/>
</dbReference>
<dbReference type="CORUM" id="P35951"/>
<dbReference type="FunCoup" id="P35951">
    <property type="interactions" value="870"/>
</dbReference>
<dbReference type="IntAct" id="P35951">
    <property type="interactions" value="2"/>
</dbReference>
<dbReference type="MINT" id="P35951"/>
<dbReference type="STRING" id="10090.ENSMUSP00000034713"/>
<dbReference type="GlyCosmos" id="P35951">
    <property type="glycosylation" value="3 sites, No reported glycans"/>
</dbReference>
<dbReference type="GlyGen" id="P35951">
    <property type="glycosylation" value="4 sites, 1 N-linked glycan (1 site), 1 O-linked glycan (1 site)"/>
</dbReference>
<dbReference type="iPTMnet" id="P35951"/>
<dbReference type="PhosphoSitePlus" id="P35951"/>
<dbReference type="SwissPalm" id="P35951"/>
<dbReference type="jPOST" id="P35951"/>
<dbReference type="PaxDb" id="10090-ENSMUSP00000034713"/>
<dbReference type="PeptideAtlas" id="P35951"/>
<dbReference type="ProteomicsDB" id="265056"/>
<dbReference type="Pumba" id="P35951"/>
<dbReference type="Antibodypedia" id="2424">
    <property type="antibodies" value="962 antibodies from 44 providers"/>
</dbReference>
<dbReference type="DNASU" id="16835"/>
<dbReference type="Ensembl" id="ENSMUST00000034713.9">
    <property type="protein sequence ID" value="ENSMUSP00000034713.8"/>
    <property type="gene ID" value="ENSMUSG00000032193.10"/>
</dbReference>
<dbReference type="GeneID" id="16835"/>
<dbReference type="KEGG" id="mmu:16835"/>
<dbReference type="UCSC" id="uc009omh.2">
    <property type="organism name" value="mouse"/>
</dbReference>
<dbReference type="AGR" id="MGI:96765"/>
<dbReference type="CTD" id="3949"/>
<dbReference type="MGI" id="MGI:96765">
    <property type="gene designation" value="Ldlr"/>
</dbReference>
<dbReference type="VEuPathDB" id="HostDB:ENSMUSG00000032193"/>
<dbReference type="eggNOG" id="KOG1215">
    <property type="taxonomic scope" value="Eukaryota"/>
</dbReference>
<dbReference type="GeneTree" id="ENSGT00940000161046"/>
<dbReference type="HOGENOM" id="CLU_008163_2_0_1"/>
<dbReference type="InParanoid" id="P35951"/>
<dbReference type="OMA" id="KWICDGK"/>
<dbReference type="OrthoDB" id="664115at2759"/>
<dbReference type="PhylomeDB" id="P35951"/>
<dbReference type="TreeFam" id="TF351700"/>
<dbReference type="Reactome" id="R-MMU-8856825">
    <property type="pathway name" value="Cargo recognition for clathrin-mediated endocytosis"/>
</dbReference>
<dbReference type="Reactome" id="R-MMU-8856828">
    <property type="pathway name" value="Clathrin-mediated endocytosis"/>
</dbReference>
<dbReference type="Reactome" id="R-MMU-8964026">
    <property type="pathway name" value="Chylomicron clearance"/>
</dbReference>
<dbReference type="Reactome" id="R-MMU-8964038">
    <property type="pathway name" value="LDL clearance"/>
</dbReference>
<dbReference type="BioGRID-ORCS" id="16835">
    <property type="hits" value="6 hits in 79 CRISPR screens"/>
</dbReference>
<dbReference type="ChiTaRS" id="Ldlr">
    <property type="organism name" value="mouse"/>
</dbReference>
<dbReference type="PRO" id="PR:P35951"/>
<dbReference type="Proteomes" id="UP000000589">
    <property type="component" value="Chromosome 9"/>
</dbReference>
<dbReference type="RNAct" id="P35951">
    <property type="molecule type" value="protein"/>
</dbReference>
<dbReference type="Bgee" id="ENSMUSG00000032193">
    <property type="expression patterns" value="Expressed in cumulus cell and 268 other cell types or tissues"/>
</dbReference>
<dbReference type="ExpressionAtlas" id="P35951">
    <property type="expression patterns" value="baseline and differential"/>
</dbReference>
<dbReference type="GO" id="GO:0045177">
    <property type="term" value="C:apical part of cell"/>
    <property type="evidence" value="ECO:0000314"/>
    <property type="project" value="BHF-UCL"/>
</dbReference>
<dbReference type="GO" id="GO:0016323">
    <property type="term" value="C:basolateral plasma membrane"/>
    <property type="evidence" value="ECO:0000314"/>
    <property type="project" value="BHF-UCL"/>
</dbReference>
<dbReference type="GO" id="GO:0009986">
    <property type="term" value="C:cell surface"/>
    <property type="evidence" value="ECO:0000314"/>
    <property type="project" value="BHF-UCL"/>
</dbReference>
<dbReference type="GO" id="GO:0005905">
    <property type="term" value="C:clathrin-coated pit"/>
    <property type="evidence" value="ECO:0007669"/>
    <property type="project" value="UniProtKB-SubCell"/>
</dbReference>
<dbReference type="GO" id="GO:0005769">
    <property type="term" value="C:early endosome"/>
    <property type="evidence" value="ECO:0000314"/>
    <property type="project" value="MGI"/>
</dbReference>
<dbReference type="GO" id="GO:0005768">
    <property type="term" value="C:endosome"/>
    <property type="evidence" value="ECO:0000314"/>
    <property type="project" value="MGI"/>
</dbReference>
<dbReference type="GO" id="GO:0009897">
    <property type="term" value="C:external side of plasma membrane"/>
    <property type="evidence" value="ECO:0007669"/>
    <property type="project" value="Ensembl"/>
</dbReference>
<dbReference type="GO" id="GO:0005615">
    <property type="term" value="C:extracellular space"/>
    <property type="evidence" value="ECO:0007005"/>
    <property type="project" value="BHF-UCL"/>
</dbReference>
<dbReference type="GO" id="GO:0005794">
    <property type="term" value="C:Golgi apparatus"/>
    <property type="evidence" value="ECO:0000250"/>
    <property type="project" value="UniProtKB"/>
</dbReference>
<dbReference type="GO" id="GO:0005770">
    <property type="term" value="C:late endosome"/>
    <property type="evidence" value="ECO:0000314"/>
    <property type="project" value="MGI"/>
</dbReference>
<dbReference type="GO" id="GO:0034362">
    <property type="term" value="C:low-density lipoprotein particle"/>
    <property type="evidence" value="ECO:0007669"/>
    <property type="project" value="UniProtKB-KW"/>
</dbReference>
<dbReference type="GO" id="GO:0005764">
    <property type="term" value="C:lysosome"/>
    <property type="evidence" value="ECO:0000314"/>
    <property type="project" value="MGI"/>
</dbReference>
<dbReference type="GO" id="GO:1990666">
    <property type="term" value="C:PCSK9-LDLR complex"/>
    <property type="evidence" value="ECO:0000250"/>
    <property type="project" value="BHF-UCL"/>
</dbReference>
<dbReference type="GO" id="GO:0005886">
    <property type="term" value="C:plasma membrane"/>
    <property type="evidence" value="ECO:0000314"/>
    <property type="project" value="ARUK-UCL"/>
</dbReference>
<dbReference type="GO" id="GO:0043235">
    <property type="term" value="C:receptor complex"/>
    <property type="evidence" value="ECO:0000266"/>
    <property type="project" value="MGI"/>
</dbReference>
<dbReference type="GO" id="GO:0036477">
    <property type="term" value="C:somatodendritic compartment"/>
    <property type="evidence" value="ECO:0000314"/>
    <property type="project" value="UniProtKB"/>
</dbReference>
<dbReference type="GO" id="GO:0097443">
    <property type="term" value="C:sorting endosome"/>
    <property type="evidence" value="ECO:0000314"/>
    <property type="project" value="MGI"/>
</dbReference>
<dbReference type="GO" id="GO:0001540">
    <property type="term" value="F:amyloid-beta binding"/>
    <property type="evidence" value="ECO:0000353"/>
    <property type="project" value="ARUK-UCL"/>
</dbReference>
<dbReference type="GO" id="GO:0005509">
    <property type="term" value="F:calcium ion binding"/>
    <property type="evidence" value="ECO:0007669"/>
    <property type="project" value="InterPro"/>
</dbReference>
<dbReference type="GO" id="GO:0042802">
    <property type="term" value="F:identical protein binding"/>
    <property type="evidence" value="ECO:0007669"/>
    <property type="project" value="Ensembl"/>
</dbReference>
<dbReference type="GO" id="GO:0030169">
    <property type="term" value="F:low-density lipoprotein particle binding"/>
    <property type="evidence" value="ECO:0000314"/>
    <property type="project" value="MGI"/>
</dbReference>
<dbReference type="GO" id="GO:0005041">
    <property type="term" value="F:low-density lipoprotein particle receptor activity"/>
    <property type="evidence" value="ECO:0000314"/>
    <property type="project" value="MGI"/>
</dbReference>
<dbReference type="GO" id="GO:0002020">
    <property type="term" value="F:protease binding"/>
    <property type="evidence" value="ECO:0007669"/>
    <property type="project" value="Ensembl"/>
</dbReference>
<dbReference type="GO" id="GO:0030229">
    <property type="term" value="F:very-low-density lipoprotein particle receptor activity"/>
    <property type="evidence" value="ECO:0000314"/>
    <property type="project" value="MGI"/>
</dbReference>
<dbReference type="GO" id="GO:0097242">
    <property type="term" value="P:amyloid-beta clearance"/>
    <property type="evidence" value="ECO:0000316"/>
    <property type="project" value="ARUK-UCL"/>
</dbReference>
<dbReference type="GO" id="GO:0150094">
    <property type="term" value="P:amyloid-beta clearance by cellular catabolic process"/>
    <property type="evidence" value="ECO:0000314"/>
    <property type="project" value="ARUK-UCL"/>
</dbReference>
<dbReference type="GO" id="GO:0060840">
    <property type="term" value="P:artery development"/>
    <property type="evidence" value="ECO:0000316"/>
    <property type="project" value="MGI"/>
</dbReference>
<dbReference type="GO" id="GO:0048844">
    <property type="term" value="P:artery morphogenesis"/>
    <property type="evidence" value="ECO:0000315"/>
    <property type="project" value="BHF-UCL"/>
</dbReference>
<dbReference type="GO" id="GO:0071398">
    <property type="term" value="P:cellular response to fatty acid"/>
    <property type="evidence" value="ECO:0000316"/>
    <property type="project" value="BHF-UCL"/>
</dbReference>
<dbReference type="GO" id="GO:0071404">
    <property type="term" value="P:cellular response to low-density lipoprotein particle stimulus"/>
    <property type="evidence" value="ECO:0007669"/>
    <property type="project" value="Ensembl"/>
</dbReference>
<dbReference type="GO" id="GO:0042632">
    <property type="term" value="P:cholesterol homeostasis"/>
    <property type="evidence" value="ECO:0000315"/>
    <property type="project" value="MGI"/>
</dbReference>
<dbReference type="GO" id="GO:0070508">
    <property type="term" value="P:cholesterol import"/>
    <property type="evidence" value="ECO:0000315"/>
    <property type="project" value="BHF-UCL"/>
</dbReference>
<dbReference type="GO" id="GO:0008203">
    <property type="term" value="P:cholesterol metabolic process"/>
    <property type="evidence" value="ECO:0000315"/>
    <property type="project" value="MGI"/>
</dbReference>
<dbReference type="GO" id="GO:0030301">
    <property type="term" value="P:cholesterol transport"/>
    <property type="evidence" value="ECO:0000315"/>
    <property type="project" value="MGI"/>
</dbReference>
<dbReference type="GO" id="GO:0051649">
    <property type="term" value="P:establishment of localization in cell"/>
    <property type="evidence" value="ECO:0000315"/>
    <property type="project" value="MGI"/>
</dbReference>
<dbReference type="GO" id="GO:0034384">
    <property type="term" value="P:high-density lipoprotein particle clearance"/>
    <property type="evidence" value="ECO:0000316"/>
    <property type="project" value="BHF-UCL"/>
</dbReference>
<dbReference type="GO" id="GO:0030299">
    <property type="term" value="P:intestinal cholesterol absorption"/>
    <property type="evidence" value="ECO:0007669"/>
    <property type="project" value="Ensembl"/>
</dbReference>
<dbReference type="GO" id="GO:0006629">
    <property type="term" value="P:lipid metabolic process"/>
    <property type="evidence" value="ECO:0000316"/>
    <property type="project" value="MGI"/>
</dbReference>
<dbReference type="GO" id="GO:0042159">
    <property type="term" value="P:lipoprotein catabolic process"/>
    <property type="evidence" value="ECO:0000314"/>
    <property type="project" value="MGI"/>
</dbReference>
<dbReference type="GO" id="GO:0042157">
    <property type="term" value="P:lipoprotein metabolic process"/>
    <property type="evidence" value="ECO:0000316"/>
    <property type="project" value="MGI"/>
</dbReference>
<dbReference type="GO" id="GO:0007616">
    <property type="term" value="P:long-term memory"/>
    <property type="evidence" value="ECO:0000316"/>
    <property type="project" value="ARUK-UCL"/>
</dbReference>
<dbReference type="GO" id="GO:0034383">
    <property type="term" value="P:low-density lipoprotein particle clearance"/>
    <property type="evidence" value="ECO:0000314"/>
    <property type="project" value="MGI"/>
</dbReference>
<dbReference type="GO" id="GO:1905907">
    <property type="term" value="P:negative regulation of amyloid fibril formation"/>
    <property type="evidence" value="ECO:0000316"/>
    <property type="project" value="ARUK-UCL"/>
</dbReference>
<dbReference type="GO" id="GO:0061889">
    <property type="term" value="P:negative regulation of astrocyte activation"/>
    <property type="evidence" value="ECO:0000316"/>
    <property type="project" value="ARUK-UCL"/>
</dbReference>
<dbReference type="GO" id="GO:0010629">
    <property type="term" value="P:negative regulation of gene expression"/>
    <property type="evidence" value="ECO:0000315"/>
    <property type="project" value="BHF-UCL"/>
</dbReference>
<dbReference type="GO" id="GO:0010989">
    <property type="term" value="P:negative regulation of low-density lipoprotein particle clearance"/>
    <property type="evidence" value="ECO:0000266"/>
    <property type="project" value="ComplexPortal"/>
</dbReference>
<dbReference type="GO" id="GO:1903979">
    <property type="term" value="P:negative regulation of microglial cell activation"/>
    <property type="evidence" value="ECO:0000316"/>
    <property type="project" value="ARUK-UCL"/>
</dbReference>
<dbReference type="GO" id="GO:0051248">
    <property type="term" value="P:negative regulation of protein metabolic process"/>
    <property type="evidence" value="ECO:0000314"/>
    <property type="project" value="ARUK-UCL"/>
</dbReference>
<dbReference type="GO" id="GO:0001920">
    <property type="term" value="P:negative regulation of receptor recycling"/>
    <property type="evidence" value="ECO:0000266"/>
    <property type="project" value="ComplexPortal"/>
</dbReference>
<dbReference type="GO" id="GO:0006909">
    <property type="term" value="P:phagocytosis"/>
    <property type="evidence" value="ECO:0000314"/>
    <property type="project" value="ARUK-UCL"/>
</dbReference>
<dbReference type="GO" id="GO:0015914">
    <property type="term" value="P:phospholipid transport"/>
    <property type="evidence" value="ECO:0000315"/>
    <property type="project" value="BHF-UCL"/>
</dbReference>
<dbReference type="GO" id="GO:0034381">
    <property type="term" value="P:plasma lipoprotein particle clearance"/>
    <property type="evidence" value="ECO:0000314"/>
    <property type="project" value="ARUK-UCL"/>
</dbReference>
<dbReference type="GO" id="GO:0010628">
    <property type="term" value="P:positive regulation of gene expression"/>
    <property type="evidence" value="ECO:0000315"/>
    <property type="project" value="BHF-UCL"/>
</dbReference>
<dbReference type="GO" id="GO:0050729">
    <property type="term" value="P:positive regulation of inflammatory response"/>
    <property type="evidence" value="ECO:0000316"/>
    <property type="project" value="BHF-UCL"/>
</dbReference>
<dbReference type="GO" id="GO:1905167">
    <property type="term" value="P:positive regulation of lysosomal protein catabolic process"/>
    <property type="evidence" value="ECO:0000314"/>
    <property type="project" value="ARUK-UCL"/>
</dbReference>
<dbReference type="GO" id="GO:0010867">
    <property type="term" value="P:positive regulation of triglyceride biosynthetic process"/>
    <property type="evidence" value="ECO:0000315"/>
    <property type="project" value="BHF-UCL"/>
</dbReference>
<dbReference type="GO" id="GO:0006898">
    <property type="term" value="P:receptor-mediated endocytosis"/>
    <property type="evidence" value="ECO:0000314"/>
    <property type="project" value="ARUK-UCL"/>
</dbReference>
<dbReference type="GO" id="GO:0090118">
    <property type="term" value="P:receptor-mediated endocytosis involved in cholesterol transport"/>
    <property type="evidence" value="ECO:0007669"/>
    <property type="project" value="Ensembl"/>
</dbReference>
<dbReference type="GO" id="GO:0090181">
    <property type="term" value="P:regulation of cholesterol metabolic process"/>
    <property type="evidence" value="ECO:0000316"/>
    <property type="project" value="ARUK-UCL"/>
</dbReference>
<dbReference type="GO" id="GO:0010899">
    <property type="term" value="P:regulation of phosphatidylcholine catabolic process"/>
    <property type="evidence" value="ECO:0000315"/>
    <property type="project" value="BHF-UCL"/>
</dbReference>
<dbReference type="GO" id="GO:0051246">
    <property type="term" value="P:regulation of protein metabolic process"/>
    <property type="evidence" value="ECO:0000316"/>
    <property type="project" value="ARUK-UCL"/>
</dbReference>
<dbReference type="GO" id="GO:0061771">
    <property type="term" value="P:response to caloric restriction"/>
    <property type="evidence" value="ECO:0000316"/>
    <property type="project" value="ARUK-UCL"/>
</dbReference>
<dbReference type="GO" id="GO:0001523">
    <property type="term" value="P:retinoid metabolic process"/>
    <property type="evidence" value="ECO:0000315"/>
    <property type="project" value="MGI"/>
</dbReference>
<dbReference type="CDD" id="cd00054">
    <property type="entry name" value="EGF_CA"/>
    <property type="match status" value="1"/>
</dbReference>
<dbReference type="CDD" id="cd00112">
    <property type="entry name" value="LDLa"/>
    <property type="match status" value="7"/>
</dbReference>
<dbReference type="FunFam" id="4.10.400.10:FF:000072">
    <property type="entry name" value="Low density lipoprotein receptor"/>
    <property type="match status" value="1"/>
</dbReference>
<dbReference type="FunFam" id="4.10.400.10:FF:000084">
    <property type="entry name" value="Low density lipoprotein receptor"/>
    <property type="match status" value="1"/>
</dbReference>
<dbReference type="FunFam" id="4.10.400.10:FF:000124">
    <property type="entry name" value="Low density lipoprotein receptor"/>
    <property type="match status" value="1"/>
</dbReference>
<dbReference type="FunFam" id="4.10.400.10:FF:000116">
    <property type="entry name" value="Low-density lipoprotein receptor"/>
    <property type="match status" value="1"/>
</dbReference>
<dbReference type="FunFam" id="2.10.25.10:FF:000009">
    <property type="entry name" value="Low-density lipoprotein receptor isoform 1"/>
    <property type="match status" value="1"/>
</dbReference>
<dbReference type="FunFam" id="2.10.25.10:FF:000052">
    <property type="entry name" value="low-density lipoprotein receptor isoform X1"/>
    <property type="match status" value="1"/>
</dbReference>
<dbReference type="FunFam" id="2.120.10.30:FF:000002">
    <property type="entry name" value="low-density lipoprotein receptor isoform X1"/>
    <property type="match status" value="1"/>
</dbReference>
<dbReference type="FunFam" id="4.10.400.10:FF:000024">
    <property type="entry name" value="Low-density lipoprotein RecePtor related"/>
    <property type="match status" value="1"/>
</dbReference>
<dbReference type="FunFam" id="4.10.1220.10:FF:000001">
    <property type="entry name" value="Prolow-density lipoprotein receptor-related protein 1"/>
    <property type="match status" value="1"/>
</dbReference>
<dbReference type="FunFam" id="4.10.400.10:FF:000006">
    <property type="entry name" value="Putative low-density lipoprotein receptor"/>
    <property type="match status" value="1"/>
</dbReference>
<dbReference type="Gene3D" id="4.10.1220.10">
    <property type="entry name" value="EGF-type module"/>
    <property type="match status" value="1"/>
</dbReference>
<dbReference type="Gene3D" id="2.10.25.10">
    <property type="entry name" value="Laminin"/>
    <property type="match status" value="3"/>
</dbReference>
<dbReference type="Gene3D" id="4.10.400.10">
    <property type="entry name" value="Low-density Lipoprotein Receptor"/>
    <property type="match status" value="6"/>
</dbReference>
<dbReference type="Gene3D" id="2.120.10.30">
    <property type="entry name" value="TolB, C-terminal domain"/>
    <property type="match status" value="1"/>
</dbReference>
<dbReference type="InterPro" id="IPR011042">
    <property type="entry name" value="6-blade_b-propeller_TolB-like"/>
</dbReference>
<dbReference type="InterPro" id="IPR001881">
    <property type="entry name" value="EGF-like_Ca-bd_dom"/>
</dbReference>
<dbReference type="InterPro" id="IPR000742">
    <property type="entry name" value="EGF-like_dom"/>
</dbReference>
<dbReference type="InterPro" id="IPR000152">
    <property type="entry name" value="EGF-type_Asp/Asn_hydroxyl_site"/>
</dbReference>
<dbReference type="InterPro" id="IPR018097">
    <property type="entry name" value="EGF_Ca-bd_CS"/>
</dbReference>
<dbReference type="InterPro" id="IPR009030">
    <property type="entry name" value="Growth_fac_rcpt_cys_sf"/>
</dbReference>
<dbReference type="InterPro" id="IPR036055">
    <property type="entry name" value="LDL_receptor-like_sf"/>
</dbReference>
<dbReference type="InterPro" id="IPR051221">
    <property type="entry name" value="LDLR-related"/>
</dbReference>
<dbReference type="InterPro" id="IPR023415">
    <property type="entry name" value="LDLR_class-A_CS"/>
</dbReference>
<dbReference type="InterPro" id="IPR000033">
    <property type="entry name" value="LDLR_classB_rpt"/>
</dbReference>
<dbReference type="InterPro" id="IPR002172">
    <property type="entry name" value="LDrepeatLR_classA_rpt"/>
</dbReference>
<dbReference type="InterPro" id="IPR049883">
    <property type="entry name" value="NOTCH1_EGF-like"/>
</dbReference>
<dbReference type="PANTHER" id="PTHR22722:SF15">
    <property type="entry name" value="LOW-DENSITY LIPOPROTEIN RECEPTOR-RELATED"/>
    <property type="match status" value="1"/>
</dbReference>
<dbReference type="PANTHER" id="PTHR22722">
    <property type="entry name" value="LOW-DENSITY LIPOPROTEIN RECEPTOR-RELATED PROTEIN 2-RELATED"/>
    <property type="match status" value="1"/>
</dbReference>
<dbReference type="Pfam" id="PF07645">
    <property type="entry name" value="EGF_CA"/>
    <property type="match status" value="1"/>
</dbReference>
<dbReference type="Pfam" id="PF14670">
    <property type="entry name" value="FXa_inhibition"/>
    <property type="match status" value="1"/>
</dbReference>
<dbReference type="Pfam" id="PF00057">
    <property type="entry name" value="Ldl_recept_a"/>
    <property type="match status" value="7"/>
</dbReference>
<dbReference type="Pfam" id="PF00058">
    <property type="entry name" value="Ldl_recept_b"/>
    <property type="match status" value="5"/>
</dbReference>
<dbReference type="PRINTS" id="PR00261">
    <property type="entry name" value="LDLRECEPTOR"/>
</dbReference>
<dbReference type="SMART" id="SM00181">
    <property type="entry name" value="EGF"/>
    <property type="match status" value="5"/>
</dbReference>
<dbReference type="SMART" id="SM00179">
    <property type="entry name" value="EGF_CA"/>
    <property type="match status" value="2"/>
</dbReference>
<dbReference type="SMART" id="SM00192">
    <property type="entry name" value="LDLa"/>
    <property type="match status" value="7"/>
</dbReference>
<dbReference type="SMART" id="SM00135">
    <property type="entry name" value="LY"/>
    <property type="match status" value="5"/>
</dbReference>
<dbReference type="SUPFAM" id="SSF57196">
    <property type="entry name" value="EGF/Laminin"/>
    <property type="match status" value="1"/>
</dbReference>
<dbReference type="SUPFAM" id="SSF57184">
    <property type="entry name" value="Growth factor receptor domain"/>
    <property type="match status" value="1"/>
</dbReference>
<dbReference type="SUPFAM" id="SSF57424">
    <property type="entry name" value="LDL receptor-like module"/>
    <property type="match status" value="6"/>
</dbReference>
<dbReference type="SUPFAM" id="SSF63825">
    <property type="entry name" value="YWTD domain"/>
    <property type="match status" value="1"/>
</dbReference>
<dbReference type="PROSITE" id="PS00010">
    <property type="entry name" value="ASX_HYDROXYL"/>
    <property type="match status" value="1"/>
</dbReference>
<dbReference type="PROSITE" id="PS01186">
    <property type="entry name" value="EGF_2"/>
    <property type="match status" value="2"/>
</dbReference>
<dbReference type="PROSITE" id="PS50026">
    <property type="entry name" value="EGF_3"/>
    <property type="match status" value="2"/>
</dbReference>
<dbReference type="PROSITE" id="PS01187">
    <property type="entry name" value="EGF_CA"/>
    <property type="match status" value="1"/>
</dbReference>
<dbReference type="PROSITE" id="PS01209">
    <property type="entry name" value="LDLRA_1"/>
    <property type="match status" value="7"/>
</dbReference>
<dbReference type="PROSITE" id="PS50068">
    <property type="entry name" value="LDLRA_2"/>
    <property type="match status" value="7"/>
</dbReference>
<dbReference type="PROSITE" id="PS51120">
    <property type="entry name" value="LDLRB"/>
    <property type="match status" value="5"/>
</dbReference>
<name>LDLR_MOUSE</name>
<accession>P35951</accession>
<accession>Q6GTJ9</accession>
<keyword id="KW-1003">Cell membrane</keyword>
<keyword id="KW-0153">Cholesterol metabolism</keyword>
<keyword id="KW-0168">Coated pit</keyword>
<keyword id="KW-1015">Disulfide bond</keyword>
<keyword id="KW-0245">EGF-like domain</keyword>
<keyword id="KW-0254">Endocytosis</keyword>
<keyword id="KW-0967">Endosome</keyword>
<keyword id="KW-0325">Glycoprotein</keyword>
<keyword id="KW-0333">Golgi apparatus</keyword>
<keyword id="KW-0427">LDL</keyword>
<keyword id="KW-0443">Lipid metabolism</keyword>
<keyword id="KW-0445">Lipid transport</keyword>
<keyword id="KW-0458">Lysosome</keyword>
<keyword id="KW-0472">Membrane</keyword>
<keyword id="KW-0597">Phosphoprotein</keyword>
<keyword id="KW-0675">Receptor</keyword>
<keyword id="KW-1185">Reference proteome</keyword>
<keyword id="KW-0677">Repeat</keyword>
<keyword id="KW-0732">Signal</keyword>
<keyword id="KW-0753">Steroid metabolism</keyword>
<keyword id="KW-1207">Sterol metabolism</keyword>
<keyword id="KW-0812">Transmembrane</keyword>
<keyword id="KW-1133">Transmembrane helix</keyword>
<keyword id="KW-0813">Transport</keyword>
<keyword id="KW-0832">Ubl conjugation</keyword>
<evidence type="ECO:0000250" key="1"/>
<evidence type="ECO:0000250" key="2">
    <source>
        <dbReference type="UniProtKB" id="P01130"/>
    </source>
</evidence>
<evidence type="ECO:0000250" key="3">
    <source>
        <dbReference type="UniProtKB" id="P01131"/>
    </source>
</evidence>
<evidence type="ECO:0000250" key="4">
    <source>
        <dbReference type="UniProtKB" id="P35952"/>
    </source>
</evidence>
<evidence type="ECO:0000255" key="5"/>
<evidence type="ECO:0000255" key="6">
    <source>
        <dbReference type="PROSITE-ProRule" id="PRU00076"/>
    </source>
</evidence>
<evidence type="ECO:0000255" key="7">
    <source>
        <dbReference type="PROSITE-ProRule" id="PRU00124"/>
    </source>
</evidence>
<evidence type="ECO:0000256" key="8">
    <source>
        <dbReference type="SAM" id="MobiDB-lite"/>
    </source>
</evidence>
<evidence type="ECO:0000269" key="9">
    <source>
    </source>
</evidence>
<evidence type="ECO:0000269" key="10">
    <source>
    </source>
</evidence>
<evidence type="ECO:0000305" key="11"/>
<sequence length="862" mass="94947">MSTADLMRRWVIALLLAAAGVAAEDSCSRNEFQCRDGKCIASKWVCDGSPECPDGSDESPETCMSVTCQSNQFSCGGRVSRCIPDSWRCDGQVDCENDSDEQGCPPKTCSQDDFRCQDGKCISPQFVCDGDRDCLDGSDEAHCQATTCGPAHFRCNSSICIPSLWACDGDVDCVDGSDEWPQNCQGRDTASKGVSSPCSSLEFHCGSSECIHRSWVCDGEADCKDKSDEEHCAVATCRPDEFQCADGSCIHGSRQCDREHDCKDMSDELGCVNVTQCDGPNKFKCHSGECISLDKVCDSARDCQDWSDEPIKECKTNECLDNNGGCSHICKDLKIGSECLCPSGFRLVDLHRCEDIDECQEPDTCSQLCVNLEGSYKCECQAGFHMDPHTRVCKAVGSIGYLLFTNRHEVRKMTLDRSEYTSLLPNLKNVVALDTEVTNNRIYWSDLSQKKIYSALMDQAPNLSYDTIISEDLHAPDGLAVDWIHRNIYWTDSVPGSVSVADTKGVKRRTLFQEAGSRPRAIVVDPVHGFMYWTDWGTPAKIKKGGLNGVDIHSLVTENIQWPNGITLDLSSGRLYWVDSKLHSISSIDVNGGNRKTILEDENRLAHPFSLAIYEDKVYWTDVINEAIFSANRLTGSDVNLVAENLLSPEDIVLFHKVTQPRGVNWCETTALLPNGGCQYLCLPAPQIGPHSPKFTCACPDGMLLAKDMRSCLTEVDTVLTTQGTSAVRPVVTASATRPPKHSEDLSAPSTPRQPVDTPGLSTVASVTVSHQVQGDMAGRGNEEQPHGMRFLSIFFPIALVALLVLGAVLLWRNWRLKNINSINFDNPVYQKTTEDELHICRSQDGYTYPSRQMVSLEDDVA</sequence>
<reference key="1">
    <citation type="journal article" date="1993" name="Biochem. Biophys. Res. Commun.">
        <title>The mouse low density lipoprotein receptor gene: cDNA sequence and exon-intron structure.</title>
        <authorList>
            <person name="Hoffer M.J.V."/>
            <person name="van Eck M.M."/>
            <person name="Petrij F."/>
            <person name="van der Zee A."/>
            <person name="de Wit E."/>
            <person name="Meijer D."/>
            <person name="Grosveld G."/>
            <person name="Havekes L.M."/>
            <person name="Hofker M.H."/>
            <person name="Frants R.R."/>
        </authorList>
    </citation>
    <scope>NUCLEOTIDE SEQUENCE [MRNA]</scope>
    <source>
        <strain>BALB/cJ</strain>
        <tissue>Liver</tissue>
    </source>
</reference>
<reference key="2">
    <citation type="journal article" date="1992" name="Somat. Cell Mol. Genet.">
        <title>Molecular cloning and nucleotide sequence of cDNA encoding a functional murine low-density-lipoprotein receptor.</title>
        <authorList>
            <person name="Polvino W.J."/>
            <person name="Dichek D.A."/>
            <person name="Mason J."/>
            <person name="Anderson W.F."/>
        </authorList>
    </citation>
    <scope>NUCLEOTIDE SEQUENCE [MRNA]</scope>
    <source>
        <tissue>Liver</tissue>
    </source>
</reference>
<reference key="3">
    <citation type="journal article" date="2009" name="PLoS Biol.">
        <title>Lineage-specific biology revealed by a finished genome assembly of the mouse.</title>
        <authorList>
            <person name="Church D.M."/>
            <person name="Goodstadt L."/>
            <person name="Hillier L.W."/>
            <person name="Zody M.C."/>
            <person name="Goldstein S."/>
            <person name="She X."/>
            <person name="Bult C.J."/>
            <person name="Agarwala R."/>
            <person name="Cherry J.L."/>
            <person name="DiCuccio M."/>
            <person name="Hlavina W."/>
            <person name="Kapustin Y."/>
            <person name="Meric P."/>
            <person name="Maglott D."/>
            <person name="Birtle Z."/>
            <person name="Marques A.C."/>
            <person name="Graves T."/>
            <person name="Zhou S."/>
            <person name="Teague B."/>
            <person name="Potamousis K."/>
            <person name="Churas C."/>
            <person name="Place M."/>
            <person name="Herschleb J."/>
            <person name="Runnheim R."/>
            <person name="Forrest D."/>
            <person name="Amos-Landgraf J."/>
            <person name="Schwartz D.C."/>
            <person name="Cheng Z."/>
            <person name="Lindblad-Toh K."/>
            <person name="Eichler E.E."/>
            <person name="Ponting C.P."/>
        </authorList>
    </citation>
    <scope>NUCLEOTIDE SEQUENCE [LARGE SCALE GENOMIC DNA]</scope>
    <source>
        <strain>C57BL/6J</strain>
    </source>
</reference>
<reference key="4">
    <citation type="journal article" date="2004" name="Genome Res.">
        <title>The status, quality, and expansion of the NIH full-length cDNA project: the Mammalian Gene Collection (MGC).</title>
        <authorList>
            <consortium name="The MGC Project Team"/>
        </authorList>
    </citation>
    <scope>NUCLEOTIDE SEQUENCE [LARGE SCALE MRNA]</scope>
    <source>
        <strain>C57BL/6J</strain>
        <tissue>Brain</tissue>
    </source>
</reference>
<reference key="5">
    <citation type="submission" date="2005-07" db="EMBL/GenBank/DDBJ databases">
        <authorList>
            <person name="Mural R.J."/>
            <person name="Adams M.D."/>
            <person name="Myers E.W."/>
            <person name="Smith H.O."/>
            <person name="Venter J.C."/>
        </authorList>
    </citation>
    <scope>NUCLEOTIDE SEQUENCE [LARGE SCALE GENOMIC DNA]</scope>
</reference>
<reference key="6">
    <citation type="journal article" date="2001" name="Traffic">
        <title>Disabled-2 colocalizes with the LDLR in clathrin-coated pits and interacts with AP-2.</title>
        <authorList>
            <person name="Morris S.M."/>
            <person name="Cooper J.A."/>
        </authorList>
    </citation>
    <scope>INTERACTION WITH DAB2</scope>
    <scope>DOMAIN</scope>
    <scope>SUBCELLULAR LOCATION</scope>
    <scope>TOPOLOGY</scope>
</reference>
<reference key="7">
    <citation type="journal article" date="2002" name="EMBO J.">
        <title>The PX-domain protein SNX17 interacts with members of the LDL receptor family and modulates endocytosis of the LDL receptor.</title>
        <authorList>
            <person name="Stockinger W."/>
            <person name="Sailler B."/>
            <person name="Strasser V."/>
            <person name="Recheis B."/>
            <person name="Fasching D."/>
            <person name="Kahr L."/>
            <person name="Schneider W.J."/>
            <person name="Nimpf J."/>
        </authorList>
    </citation>
    <scope>INTERACTION WITH SNX17</scope>
</reference>
<reference key="8">
    <citation type="journal article" date="2010" name="Cell">
        <title>A tissue-specific atlas of mouse protein phosphorylation and expression.</title>
        <authorList>
            <person name="Huttlin E.L."/>
            <person name="Jedrychowski M.P."/>
            <person name="Elias J.E."/>
            <person name="Goswami T."/>
            <person name="Rad R."/>
            <person name="Beausoleil S.A."/>
            <person name="Villen J."/>
            <person name="Haas W."/>
            <person name="Sowa M.E."/>
            <person name="Gygi S.P."/>
        </authorList>
    </citation>
    <scope>IDENTIFICATION BY MASS SPECTROMETRY [LARGE SCALE ANALYSIS]</scope>
    <source>
        <tissue>Brain</tissue>
        <tissue>Brown adipose tissue</tissue>
        <tissue>Liver</tissue>
        <tissue>Lung</tissue>
        <tissue>Pancreas</tissue>
        <tissue>Spleen</tissue>
        <tissue>Testis</tissue>
    </source>
</reference>
<gene>
    <name type="primary">Ldlr</name>
</gene>
<protein>
    <recommendedName>
        <fullName>Low-density lipoprotein receptor</fullName>
        <shortName>LDL receptor</shortName>
    </recommendedName>
</protein>
<feature type="signal peptide" evidence="3">
    <location>
        <begin position="1"/>
        <end position="21"/>
    </location>
</feature>
<feature type="chain" id="PRO_0000017313" description="Low-density lipoprotein receptor">
    <location>
        <begin position="22"/>
        <end position="862"/>
    </location>
</feature>
<feature type="topological domain" description="Extracellular" evidence="3">
    <location>
        <begin position="22"/>
        <end position="790"/>
    </location>
</feature>
<feature type="transmembrane region" description="Helical" evidence="5">
    <location>
        <begin position="791"/>
        <end position="812"/>
    </location>
</feature>
<feature type="topological domain" description="Cytoplasmic" evidence="9">
    <location>
        <begin position="813"/>
        <end position="862"/>
    </location>
</feature>
<feature type="domain" description="LDL-receptor class A 1" evidence="7">
    <location>
        <begin position="25"/>
        <end position="65"/>
    </location>
</feature>
<feature type="domain" description="LDL-receptor class A 2" evidence="7">
    <location>
        <begin position="66"/>
        <end position="106"/>
    </location>
</feature>
<feature type="domain" description="LDL-receptor class A 3" evidence="7">
    <location>
        <begin position="107"/>
        <end position="145"/>
    </location>
</feature>
<feature type="domain" description="LDL-receptor class A 4" evidence="7">
    <location>
        <begin position="146"/>
        <end position="186"/>
    </location>
</feature>
<feature type="domain" description="LDL-receptor class A 5" evidence="7">
    <location>
        <begin position="196"/>
        <end position="234"/>
    </location>
</feature>
<feature type="domain" description="LDL-receptor class A 6" evidence="7">
    <location>
        <begin position="235"/>
        <end position="273"/>
    </location>
</feature>
<feature type="domain" description="LDL-receptor class A 7" evidence="7">
    <location>
        <begin position="275"/>
        <end position="314"/>
    </location>
</feature>
<feature type="domain" description="EGF-like 1" evidence="6">
    <location>
        <begin position="315"/>
        <end position="354"/>
    </location>
</feature>
<feature type="domain" description="EGF-like 2; calcium-binding" evidence="6">
    <location>
        <begin position="355"/>
        <end position="394"/>
    </location>
</feature>
<feature type="repeat" description="LDL-receptor class B 1">
    <location>
        <begin position="398"/>
        <end position="439"/>
    </location>
</feature>
<feature type="repeat" description="LDL-receptor class B 2">
    <location>
        <begin position="440"/>
        <end position="485"/>
    </location>
</feature>
<feature type="repeat" description="LDL-receptor class B 3">
    <location>
        <begin position="486"/>
        <end position="528"/>
    </location>
</feature>
<feature type="repeat" description="LDL-receptor class B 4">
    <location>
        <begin position="529"/>
        <end position="572"/>
    </location>
</feature>
<feature type="repeat" description="LDL-receptor class B 5">
    <location>
        <begin position="573"/>
        <end position="615"/>
    </location>
</feature>
<feature type="repeat" description="LDL-receptor class B 6">
    <location>
        <begin position="616"/>
        <end position="658"/>
    </location>
</feature>
<feature type="domain" description="EGF-like 3" evidence="6">
    <location>
        <begin position="663"/>
        <end position="713"/>
    </location>
</feature>
<feature type="region of interest" description="Clustered O-linked oligosaccharides">
    <location>
        <begin position="722"/>
        <end position="770"/>
    </location>
</feature>
<feature type="region of interest" description="Disordered" evidence="8">
    <location>
        <begin position="730"/>
        <end position="761"/>
    </location>
</feature>
<feature type="region of interest" description="Required for MYLIP-triggered down-regulation of LDLR" evidence="2">
    <location>
        <begin position="813"/>
        <end position="862"/>
    </location>
</feature>
<feature type="short sequence motif" description="NPXY motif" evidence="2">
    <location>
        <begin position="825"/>
        <end position="830"/>
    </location>
</feature>
<feature type="modified residue" description="Phosphothreonine" evidence="4">
    <location>
        <position position="725"/>
    </location>
</feature>
<feature type="modified residue" description="Phosphothreonine" evidence="4">
    <location>
        <position position="733"/>
    </location>
</feature>
<feature type="modified residue" description="Phosphoserine" evidence="4">
    <location>
        <position position="735"/>
    </location>
</feature>
<feature type="glycosylation site" description="N-linked (GlcNAc...) asparagine" evidence="5">
    <location>
        <position position="97"/>
    </location>
</feature>
<feature type="glycosylation site" description="N-linked (GlcNAc...) asparagine" evidence="5">
    <location>
        <position position="273"/>
    </location>
</feature>
<feature type="glycosylation site" description="N-linked (GlcNAc...) asparagine" evidence="5">
    <location>
        <position position="462"/>
    </location>
</feature>
<feature type="disulfide bond" evidence="1">
    <location>
        <begin position="34"/>
        <end position="52"/>
    </location>
</feature>
<feature type="disulfide bond" evidence="1">
    <location>
        <begin position="46"/>
        <end position="63"/>
    </location>
</feature>
<feature type="disulfide bond" evidence="1">
    <location>
        <begin position="68"/>
        <end position="82"/>
    </location>
</feature>
<feature type="disulfide bond" evidence="1">
    <location>
        <begin position="75"/>
        <end position="95"/>
    </location>
</feature>
<feature type="disulfide bond" evidence="1">
    <location>
        <begin position="89"/>
        <end position="104"/>
    </location>
</feature>
<feature type="disulfide bond" evidence="1">
    <location>
        <begin position="109"/>
        <end position="121"/>
    </location>
</feature>
<feature type="disulfide bond" evidence="1">
    <location>
        <begin position="116"/>
        <end position="134"/>
    </location>
</feature>
<feature type="disulfide bond" evidence="1">
    <location>
        <begin position="128"/>
        <end position="143"/>
    </location>
</feature>
<feature type="disulfide bond" evidence="1">
    <location>
        <begin position="148"/>
        <end position="160"/>
    </location>
</feature>
<feature type="disulfide bond" evidence="1">
    <location>
        <begin position="155"/>
        <end position="173"/>
    </location>
</feature>
<feature type="disulfide bond" evidence="1">
    <location>
        <begin position="167"/>
        <end position="184"/>
    </location>
</feature>
<feature type="disulfide bond" evidence="1">
    <location>
        <begin position="198"/>
        <end position="210"/>
    </location>
</feature>
<feature type="disulfide bond" evidence="1">
    <location>
        <begin position="205"/>
        <end position="223"/>
    </location>
</feature>
<feature type="disulfide bond" evidence="1">
    <location>
        <begin position="217"/>
        <end position="232"/>
    </location>
</feature>
<feature type="disulfide bond" evidence="1">
    <location>
        <begin position="237"/>
        <end position="249"/>
    </location>
</feature>
<feature type="disulfide bond" evidence="1">
    <location>
        <begin position="244"/>
        <end position="262"/>
    </location>
</feature>
<feature type="disulfide bond" evidence="1">
    <location>
        <begin position="256"/>
        <end position="271"/>
    </location>
</feature>
<feature type="disulfide bond" evidence="1">
    <location>
        <begin position="277"/>
        <end position="290"/>
    </location>
</feature>
<feature type="disulfide bond" evidence="1">
    <location>
        <begin position="285"/>
        <end position="303"/>
    </location>
</feature>
<feature type="disulfide bond" evidence="1">
    <location>
        <begin position="297"/>
        <end position="314"/>
    </location>
</feature>
<feature type="disulfide bond" evidence="1">
    <location>
        <begin position="319"/>
        <end position="330"/>
    </location>
</feature>
<feature type="disulfide bond" evidence="1">
    <location>
        <begin position="326"/>
        <end position="339"/>
    </location>
</feature>
<feature type="disulfide bond" evidence="1">
    <location>
        <begin position="341"/>
        <end position="353"/>
    </location>
</feature>
<feature type="disulfide bond" evidence="1">
    <location>
        <begin position="359"/>
        <end position="369"/>
    </location>
</feature>
<feature type="disulfide bond" evidence="1">
    <location>
        <begin position="365"/>
        <end position="378"/>
    </location>
</feature>
<feature type="disulfide bond" evidence="1">
    <location>
        <begin position="380"/>
        <end position="393"/>
    </location>
</feature>
<feature type="disulfide bond" evidence="1">
    <location>
        <begin position="667"/>
        <end position="682"/>
    </location>
</feature>
<feature type="disulfide bond" evidence="1">
    <location>
        <begin position="678"/>
        <end position="697"/>
    </location>
</feature>
<feature type="disulfide bond" evidence="1">
    <location>
        <begin position="699"/>
        <end position="712"/>
    </location>
</feature>
<feature type="sequence conflict" description="In Ref. 1; CAA79581." evidence="11" ref="1">
    <original>A</original>
    <variation>V</variation>
    <location>
        <position position="23"/>
    </location>
</feature>
<feature type="sequence conflict" description="In Ref. 1; CAA79581." evidence="11" ref="1">
    <original>C</original>
    <variation>G</variation>
    <location>
        <position position="27"/>
    </location>
</feature>
<feature type="sequence conflict" description="In Ref. 1; CAA79581." evidence="11" ref="1">
    <original>E</original>
    <variation>K</variation>
    <location>
        <position position="61"/>
    </location>
</feature>
<feature type="sequence conflict" description="In Ref. 1; CAA79581." evidence="11" ref="1">
    <original>Q</original>
    <variation>P</variation>
    <location>
        <position position="144"/>
    </location>
</feature>
<feature type="sequence conflict" description="In Ref. 1; CAA79581." evidence="11" ref="1">
    <original>N</original>
    <variation>K</variation>
    <location>
        <position position="156"/>
    </location>
</feature>
<feature type="sequence conflict" description="In Ref. 1; CAA79581." evidence="11" ref="1">
    <original>D</original>
    <variation>H</variation>
    <location>
        <position position="178"/>
    </location>
</feature>
<feature type="sequence conflict" description="In Ref. 1; CAA79581." evidence="11" ref="1">
    <original>GR</original>
    <variation>AE</variation>
    <location>
        <begin position="186"/>
        <end position="187"/>
    </location>
</feature>
<feature type="sequence conflict" description="In Ref. 1; CAA79581." evidence="11" ref="1">
    <original>N</original>
    <variation>NIT</variation>
    <location>
        <position position="819"/>
    </location>
</feature>
<proteinExistence type="evidence at protein level"/>
<comment type="function">
    <text evidence="2">Binds low density lipoprotein /LDL, the major cholesterol-carrying lipoprotein of plasma, and transports it into cells by endocytosis. In order to be internalized, the receptor-ligand complexes must first cluster into clathrin-coated pits. Forms a ternary complex with PGRMC1 and TMEM97 receptors which increases LDLR-mediated LDL internalization.</text>
</comment>
<comment type="subunit">
    <text evidence="2 9 10">Interacts (via NPXY motif) with DAB2 (via PID domain); the interaction is impaired by tyrosine phosphorylation of the NPXY motif (PubMed:11247302). Interacts (via NPXY motif) with LDLRAP1 (via PID domain) (By similarity). Interacts with ARRB1 (By similarity). Interacts with SNX17 (PubMed:12169628). Interacts with the full-length immature form of PCSK9 (via C-terminus) (By similarity). Interacts with PGRMC1 and TMEM97; the interaction increases LDL internalization (By similarity).</text>
</comment>
<comment type="subcellular location">
    <subcellularLocation>
        <location evidence="2">Cell membrane</location>
        <topology evidence="3">Single-pass type I membrane protein</topology>
    </subcellularLocation>
    <subcellularLocation>
        <location evidence="9">Membrane</location>
        <location evidence="9">Clathrin-coated pit</location>
    </subcellularLocation>
    <subcellularLocation>
        <location evidence="2">Golgi apparatus</location>
    </subcellularLocation>
    <subcellularLocation>
        <location evidence="2">Early endosome</location>
    </subcellularLocation>
    <subcellularLocation>
        <location evidence="2">Late endosome</location>
    </subcellularLocation>
    <subcellularLocation>
        <location evidence="2">Lysosome</location>
    </subcellularLocation>
    <text evidence="10">Rapidly endocytosed upon ligand binding.</text>
</comment>
<comment type="domain">
    <text evidence="9">The NPXY motif mediates the interaction with the clathrin adapter DAB2 and with LDLRAP1 which are involved in receptor internalization. A few residues outside the motif also play a role in the interaction.</text>
</comment>
<comment type="PTM">
    <text evidence="2">N- and O-glycosylated.</text>
</comment>
<comment type="PTM">
    <text evidence="2">Ubiquitinated by MYLIP leading to degradation.</text>
</comment>
<comment type="similarity">
    <text evidence="11">Belongs to the LDLR family.</text>
</comment>
<organism>
    <name type="scientific">Mus musculus</name>
    <name type="common">Mouse</name>
    <dbReference type="NCBI Taxonomy" id="10090"/>
    <lineage>
        <taxon>Eukaryota</taxon>
        <taxon>Metazoa</taxon>
        <taxon>Chordata</taxon>
        <taxon>Craniata</taxon>
        <taxon>Vertebrata</taxon>
        <taxon>Euteleostomi</taxon>
        <taxon>Mammalia</taxon>
        <taxon>Eutheria</taxon>
        <taxon>Euarchontoglires</taxon>
        <taxon>Glires</taxon>
        <taxon>Rodentia</taxon>
        <taxon>Myomorpha</taxon>
        <taxon>Muroidea</taxon>
        <taxon>Muridae</taxon>
        <taxon>Murinae</taxon>
        <taxon>Mus</taxon>
        <taxon>Mus</taxon>
    </lineage>
</organism>